<comment type="function">
    <text evidence="1">Part of the high-affinity ATP-driven potassium transport (or Kdp) system, which catalyzes the hydrolysis of ATP coupled with the electrogenic transport of potassium into the cytoplasm. This subunit acts as a catalytic chaperone that increases the ATP-binding affinity of the ATP-hydrolyzing subunit KdpB by the formation of a transient KdpB/KdpC/ATP ternary complex.</text>
</comment>
<comment type="subunit">
    <text evidence="1">The system is composed of three essential subunits: KdpA, KdpB and KdpC.</text>
</comment>
<comment type="subcellular location">
    <subcellularLocation>
        <location evidence="1">Cell inner membrane</location>
        <topology evidence="1">Single-pass membrane protein</topology>
    </subcellularLocation>
</comment>
<comment type="similarity">
    <text evidence="1">Belongs to the KdpC family.</text>
</comment>
<sequence length="190" mass="20427">MRGLRPALSTFIFLLLITGGVYPLLTTVLGQWWFPWQANGSLIREGDTVRGSALIGQNFTGNGYFQGRPSATAEMPYNPQASGGSNLAVSNPELDKQIAARVAALRAANPDASTNVPVELVTASASGLDNNITPQAAVWQIPRVAKARNLSVEQLTQLIAKYSQQPLVKYIGQPVVNIVELNLALDKLDE</sequence>
<name>KDPC_ECOSE</name>
<evidence type="ECO:0000255" key="1">
    <source>
        <dbReference type="HAMAP-Rule" id="MF_00276"/>
    </source>
</evidence>
<protein>
    <recommendedName>
        <fullName evidence="1">Potassium-transporting ATPase KdpC subunit</fullName>
    </recommendedName>
    <alternativeName>
        <fullName evidence="1">ATP phosphohydrolase [potassium-transporting] C chain</fullName>
    </alternativeName>
    <alternativeName>
        <fullName evidence="1">Potassium-binding and translocating subunit C</fullName>
    </alternativeName>
    <alternativeName>
        <fullName evidence="1">Potassium-translocating ATPase C chain</fullName>
    </alternativeName>
</protein>
<organism>
    <name type="scientific">Escherichia coli (strain SE11)</name>
    <dbReference type="NCBI Taxonomy" id="409438"/>
    <lineage>
        <taxon>Bacteria</taxon>
        <taxon>Pseudomonadati</taxon>
        <taxon>Pseudomonadota</taxon>
        <taxon>Gammaproteobacteria</taxon>
        <taxon>Enterobacterales</taxon>
        <taxon>Enterobacteriaceae</taxon>
        <taxon>Escherichia</taxon>
    </lineage>
</organism>
<feature type="chain" id="PRO_1000114723" description="Potassium-transporting ATPase KdpC subunit">
    <location>
        <begin position="1"/>
        <end position="190"/>
    </location>
</feature>
<feature type="transmembrane region" description="Helical" evidence="1">
    <location>
        <begin position="10"/>
        <end position="30"/>
    </location>
</feature>
<dbReference type="EMBL" id="AP009240">
    <property type="protein sequence ID" value="BAG76280.1"/>
    <property type="molecule type" value="Genomic_DNA"/>
</dbReference>
<dbReference type="RefSeq" id="WP_001297248.1">
    <property type="nucleotide sequence ID" value="NC_011415.1"/>
</dbReference>
<dbReference type="SMR" id="B6HYQ4"/>
<dbReference type="KEGG" id="ecy:ECSE_0756"/>
<dbReference type="HOGENOM" id="CLU_077094_2_0_6"/>
<dbReference type="Proteomes" id="UP000008199">
    <property type="component" value="Chromosome"/>
</dbReference>
<dbReference type="GO" id="GO:0005886">
    <property type="term" value="C:plasma membrane"/>
    <property type="evidence" value="ECO:0007669"/>
    <property type="project" value="UniProtKB-SubCell"/>
</dbReference>
<dbReference type="GO" id="GO:0005524">
    <property type="term" value="F:ATP binding"/>
    <property type="evidence" value="ECO:0007669"/>
    <property type="project" value="UniProtKB-UniRule"/>
</dbReference>
<dbReference type="GO" id="GO:0008556">
    <property type="term" value="F:P-type potassium transmembrane transporter activity"/>
    <property type="evidence" value="ECO:0007669"/>
    <property type="project" value="InterPro"/>
</dbReference>
<dbReference type="HAMAP" id="MF_00276">
    <property type="entry name" value="KdpC"/>
    <property type="match status" value="1"/>
</dbReference>
<dbReference type="InterPro" id="IPR003820">
    <property type="entry name" value="KdpC"/>
</dbReference>
<dbReference type="NCBIfam" id="TIGR00681">
    <property type="entry name" value="kdpC"/>
    <property type="match status" value="1"/>
</dbReference>
<dbReference type="NCBIfam" id="NF001454">
    <property type="entry name" value="PRK00315.1"/>
    <property type="match status" value="1"/>
</dbReference>
<dbReference type="PANTHER" id="PTHR30042">
    <property type="entry name" value="POTASSIUM-TRANSPORTING ATPASE C CHAIN"/>
    <property type="match status" value="1"/>
</dbReference>
<dbReference type="PANTHER" id="PTHR30042:SF2">
    <property type="entry name" value="POTASSIUM-TRANSPORTING ATPASE KDPC SUBUNIT"/>
    <property type="match status" value="1"/>
</dbReference>
<dbReference type="Pfam" id="PF02669">
    <property type="entry name" value="KdpC"/>
    <property type="match status" value="1"/>
</dbReference>
<dbReference type="PIRSF" id="PIRSF001296">
    <property type="entry name" value="K_ATPase_KdpC"/>
    <property type="match status" value="1"/>
</dbReference>
<gene>
    <name evidence="1" type="primary">kdpC</name>
    <name type="ordered locus">ECSE_0756</name>
</gene>
<accession>B6HYQ4</accession>
<keyword id="KW-0067">ATP-binding</keyword>
<keyword id="KW-0997">Cell inner membrane</keyword>
<keyword id="KW-1003">Cell membrane</keyword>
<keyword id="KW-0406">Ion transport</keyword>
<keyword id="KW-0472">Membrane</keyword>
<keyword id="KW-0547">Nucleotide-binding</keyword>
<keyword id="KW-0630">Potassium</keyword>
<keyword id="KW-0633">Potassium transport</keyword>
<keyword id="KW-0812">Transmembrane</keyword>
<keyword id="KW-1133">Transmembrane helix</keyword>
<keyword id="KW-0813">Transport</keyword>
<proteinExistence type="inferred from homology"/>
<reference key="1">
    <citation type="journal article" date="2008" name="DNA Res.">
        <title>Complete genome sequence and comparative analysis of the wild-type commensal Escherichia coli strain SE11 isolated from a healthy adult.</title>
        <authorList>
            <person name="Oshima K."/>
            <person name="Toh H."/>
            <person name="Ogura Y."/>
            <person name="Sasamoto H."/>
            <person name="Morita H."/>
            <person name="Park S.-H."/>
            <person name="Ooka T."/>
            <person name="Iyoda S."/>
            <person name="Taylor T.D."/>
            <person name="Hayashi T."/>
            <person name="Itoh K."/>
            <person name="Hattori M."/>
        </authorList>
    </citation>
    <scope>NUCLEOTIDE SEQUENCE [LARGE SCALE GENOMIC DNA]</scope>
    <source>
        <strain>SE11</strain>
    </source>
</reference>